<proteinExistence type="inferred from homology"/>
<keyword id="KW-1185">Reference proteome</keyword>
<keyword id="KW-0687">Ribonucleoprotein</keyword>
<keyword id="KW-0689">Ribosomal protein</keyword>
<keyword id="KW-0694">RNA-binding</keyword>
<keyword id="KW-0699">rRNA-binding</keyword>
<feature type="chain" id="PRO_0000270673" description="Large ribosomal subunit protein bL21">
    <location>
        <begin position="1"/>
        <end position="103"/>
    </location>
</feature>
<reference key="1">
    <citation type="submission" date="2003-06" db="EMBL/GenBank/DDBJ databases">
        <title>The complete genome sequence of Haemophilus ducreyi.</title>
        <authorList>
            <person name="Munson R.S. Jr."/>
            <person name="Ray W.C."/>
            <person name="Mahairas G."/>
            <person name="Sabo P."/>
            <person name="Mungur R."/>
            <person name="Johnson L."/>
            <person name="Nguyen D."/>
            <person name="Wang J."/>
            <person name="Forst C."/>
            <person name="Hood L."/>
        </authorList>
    </citation>
    <scope>NUCLEOTIDE SEQUENCE [LARGE SCALE GENOMIC DNA]</scope>
    <source>
        <strain>35000HP / ATCC 700724</strain>
    </source>
</reference>
<organism>
    <name type="scientific">Haemophilus ducreyi (strain 35000HP / ATCC 700724)</name>
    <dbReference type="NCBI Taxonomy" id="233412"/>
    <lineage>
        <taxon>Bacteria</taxon>
        <taxon>Pseudomonadati</taxon>
        <taxon>Pseudomonadota</taxon>
        <taxon>Gammaproteobacteria</taxon>
        <taxon>Pasteurellales</taxon>
        <taxon>Pasteurellaceae</taxon>
        <taxon>Haemophilus</taxon>
    </lineage>
</organism>
<accession>Q7VP92</accession>
<name>RL21_HAEDU</name>
<sequence length="103" mass="11515">MYAIFQSGGKQHRVSEGQVVRLEKLELATGEKVEFDSVLMVVNGEDIKIGAPVVAGAKVMAEVVAQGRGDKIKIVKFRRRKHSRKQQGHRQWFTEVKITGIQA</sequence>
<gene>
    <name evidence="1" type="primary">rplU</name>
    <name type="ordered locus">HD_0203</name>
</gene>
<dbReference type="EMBL" id="AE017143">
    <property type="protein sequence ID" value="AAP95195.1"/>
    <property type="molecule type" value="Genomic_DNA"/>
</dbReference>
<dbReference type="RefSeq" id="WP_010944249.1">
    <property type="nucleotide sequence ID" value="NC_002940.2"/>
</dbReference>
<dbReference type="SMR" id="Q7VP92"/>
<dbReference type="STRING" id="233412.HD_0203"/>
<dbReference type="GeneID" id="60733336"/>
<dbReference type="KEGG" id="hdu:HD_0203"/>
<dbReference type="eggNOG" id="COG0261">
    <property type="taxonomic scope" value="Bacteria"/>
</dbReference>
<dbReference type="HOGENOM" id="CLU_061463_3_2_6"/>
<dbReference type="OrthoDB" id="9813334at2"/>
<dbReference type="Proteomes" id="UP000001022">
    <property type="component" value="Chromosome"/>
</dbReference>
<dbReference type="GO" id="GO:0005737">
    <property type="term" value="C:cytoplasm"/>
    <property type="evidence" value="ECO:0007669"/>
    <property type="project" value="UniProtKB-ARBA"/>
</dbReference>
<dbReference type="GO" id="GO:1990904">
    <property type="term" value="C:ribonucleoprotein complex"/>
    <property type="evidence" value="ECO:0007669"/>
    <property type="project" value="UniProtKB-KW"/>
</dbReference>
<dbReference type="GO" id="GO:0005840">
    <property type="term" value="C:ribosome"/>
    <property type="evidence" value="ECO:0007669"/>
    <property type="project" value="UniProtKB-KW"/>
</dbReference>
<dbReference type="GO" id="GO:0019843">
    <property type="term" value="F:rRNA binding"/>
    <property type="evidence" value="ECO:0007669"/>
    <property type="project" value="UniProtKB-UniRule"/>
</dbReference>
<dbReference type="GO" id="GO:0003735">
    <property type="term" value="F:structural constituent of ribosome"/>
    <property type="evidence" value="ECO:0007669"/>
    <property type="project" value="InterPro"/>
</dbReference>
<dbReference type="GO" id="GO:0006412">
    <property type="term" value="P:translation"/>
    <property type="evidence" value="ECO:0007669"/>
    <property type="project" value="UniProtKB-UniRule"/>
</dbReference>
<dbReference type="HAMAP" id="MF_01363">
    <property type="entry name" value="Ribosomal_bL21"/>
    <property type="match status" value="1"/>
</dbReference>
<dbReference type="InterPro" id="IPR028909">
    <property type="entry name" value="bL21-like"/>
</dbReference>
<dbReference type="InterPro" id="IPR036164">
    <property type="entry name" value="bL21-like_sf"/>
</dbReference>
<dbReference type="InterPro" id="IPR001787">
    <property type="entry name" value="Ribosomal_bL21"/>
</dbReference>
<dbReference type="InterPro" id="IPR018258">
    <property type="entry name" value="Ribosomal_bL21_CS"/>
</dbReference>
<dbReference type="NCBIfam" id="TIGR00061">
    <property type="entry name" value="L21"/>
    <property type="match status" value="1"/>
</dbReference>
<dbReference type="PANTHER" id="PTHR21349">
    <property type="entry name" value="50S RIBOSOMAL PROTEIN L21"/>
    <property type="match status" value="1"/>
</dbReference>
<dbReference type="PANTHER" id="PTHR21349:SF0">
    <property type="entry name" value="LARGE RIBOSOMAL SUBUNIT PROTEIN BL21M"/>
    <property type="match status" value="1"/>
</dbReference>
<dbReference type="Pfam" id="PF00829">
    <property type="entry name" value="Ribosomal_L21p"/>
    <property type="match status" value="1"/>
</dbReference>
<dbReference type="SUPFAM" id="SSF141091">
    <property type="entry name" value="L21p-like"/>
    <property type="match status" value="1"/>
</dbReference>
<dbReference type="PROSITE" id="PS01169">
    <property type="entry name" value="RIBOSOMAL_L21"/>
    <property type="match status" value="1"/>
</dbReference>
<protein>
    <recommendedName>
        <fullName evidence="1">Large ribosomal subunit protein bL21</fullName>
    </recommendedName>
    <alternativeName>
        <fullName evidence="2">50S ribosomal protein L21</fullName>
    </alternativeName>
</protein>
<comment type="function">
    <text evidence="1">This protein binds to 23S rRNA in the presence of protein L20.</text>
</comment>
<comment type="subunit">
    <text evidence="1">Part of the 50S ribosomal subunit. Contacts protein L20.</text>
</comment>
<comment type="similarity">
    <text evidence="1">Belongs to the bacterial ribosomal protein bL21 family.</text>
</comment>
<evidence type="ECO:0000255" key="1">
    <source>
        <dbReference type="HAMAP-Rule" id="MF_01363"/>
    </source>
</evidence>
<evidence type="ECO:0000305" key="2"/>